<keyword id="KW-0031">Aminopeptidase</keyword>
<keyword id="KW-0325">Glycoprotein</keyword>
<keyword id="KW-0378">Hydrolase</keyword>
<keyword id="KW-0472">Membrane</keyword>
<keyword id="KW-0645">Protease</keyword>
<keyword id="KW-1185">Reference proteome</keyword>
<keyword id="KW-0720">Serine protease</keyword>
<keyword id="KW-0735">Signal-anchor</keyword>
<keyword id="KW-0812">Transmembrane</keyword>
<keyword id="KW-1133">Transmembrane helix</keyword>
<keyword id="KW-0926">Vacuole</keyword>
<dbReference type="EC" id="3.4.14.5"/>
<dbReference type="EMBL" id="KN293994">
    <property type="protein sequence ID" value="EEH39262.1"/>
    <property type="molecule type" value="Genomic_DNA"/>
</dbReference>
<dbReference type="RefSeq" id="XP_002796716.1">
    <property type="nucleotide sequence ID" value="XM_002796670.2"/>
</dbReference>
<dbReference type="SMR" id="C1GT79"/>
<dbReference type="STRING" id="502779.C1GT79"/>
<dbReference type="ESTHER" id="parba-dapb">
    <property type="family name" value="DPP4N_Peptidase_S9"/>
</dbReference>
<dbReference type="MEROPS" id="S09.006"/>
<dbReference type="GlyCosmos" id="C1GT79">
    <property type="glycosylation" value="7 sites, No reported glycans"/>
</dbReference>
<dbReference type="GeneID" id="9099681"/>
<dbReference type="KEGG" id="pbl:PAAG_01724"/>
<dbReference type="VEuPathDB" id="FungiDB:PAAG_01724"/>
<dbReference type="eggNOG" id="KOG2100">
    <property type="taxonomic scope" value="Eukaryota"/>
</dbReference>
<dbReference type="HOGENOM" id="CLU_006105_0_1_1"/>
<dbReference type="OMA" id="MRTPQEN"/>
<dbReference type="OrthoDB" id="16520at2759"/>
<dbReference type="Proteomes" id="UP000002059">
    <property type="component" value="Partially assembled WGS sequence"/>
</dbReference>
<dbReference type="GO" id="GO:0005886">
    <property type="term" value="C:plasma membrane"/>
    <property type="evidence" value="ECO:0007669"/>
    <property type="project" value="TreeGrafter"/>
</dbReference>
<dbReference type="GO" id="GO:0005774">
    <property type="term" value="C:vacuolar membrane"/>
    <property type="evidence" value="ECO:0007669"/>
    <property type="project" value="UniProtKB-SubCell"/>
</dbReference>
<dbReference type="GO" id="GO:0004177">
    <property type="term" value="F:aminopeptidase activity"/>
    <property type="evidence" value="ECO:0007669"/>
    <property type="project" value="UniProtKB-KW"/>
</dbReference>
<dbReference type="GO" id="GO:0008239">
    <property type="term" value="F:dipeptidyl-peptidase activity"/>
    <property type="evidence" value="ECO:0007669"/>
    <property type="project" value="UniProtKB-EC"/>
</dbReference>
<dbReference type="GO" id="GO:0004252">
    <property type="term" value="F:serine-type endopeptidase activity"/>
    <property type="evidence" value="ECO:0007669"/>
    <property type="project" value="InterPro"/>
</dbReference>
<dbReference type="GO" id="GO:0006508">
    <property type="term" value="P:proteolysis"/>
    <property type="evidence" value="ECO:0007669"/>
    <property type="project" value="UniProtKB-KW"/>
</dbReference>
<dbReference type="FunFam" id="3.40.50.1820:FF:000003">
    <property type="entry name" value="Dipeptidyl peptidase 4"/>
    <property type="match status" value="1"/>
</dbReference>
<dbReference type="Gene3D" id="3.40.50.1820">
    <property type="entry name" value="alpha/beta hydrolase"/>
    <property type="match status" value="1"/>
</dbReference>
<dbReference type="Gene3D" id="2.140.10.30">
    <property type="entry name" value="Dipeptidylpeptidase IV, N-terminal domain"/>
    <property type="match status" value="1"/>
</dbReference>
<dbReference type="InterPro" id="IPR029058">
    <property type="entry name" value="AB_hydrolase_fold"/>
</dbReference>
<dbReference type="InterPro" id="IPR002471">
    <property type="entry name" value="Pept_S9_AS"/>
</dbReference>
<dbReference type="InterPro" id="IPR001375">
    <property type="entry name" value="Peptidase_S9_cat"/>
</dbReference>
<dbReference type="InterPro" id="IPR002469">
    <property type="entry name" value="Peptidase_S9B_N"/>
</dbReference>
<dbReference type="InterPro" id="IPR050278">
    <property type="entry name" value="Serine_Prot_S9B/DPPIV"/>
</dbReference>
<dbReference type="PANTHER" id="PTHR11731:SF200">
    <property type="entry name" value="DIPEPTIDYL PEPTIDASE 10, ISOFORM B"/>
    <property type="match status" value="1"/>
</dbReference>
<dbReference type="PANTHER" id="PTHR11731">
    <property type="entry name" value="PROTEASE FAMILY S9B,C DIPEPTIDYL-PEPTIDASE IV-RELATED"/>
    <property type="match status" value="1"/>
</dbReference>
<dbReference type="Pfam" id="PF00930">
    <property type="entry name" value="DPPIV_N"/>
    <property type="match status" value="1"/>
</dbReference>
<dbReference type="Pfam" id="PF00326">
    <property type="entry name" value="Peptidase_S9"/>
    <property type="match status" value="1"/>
</dbReference>
<dbReference type="SUPFAM" id="SSF53474">
    <property type="entry name" value="alpha/beta-Hydrolases"/>
    <property type="match status" value="1"/>
</dbReference>
<dbReference type="SUPFAM" id="SSF82171">
    <property type="entry name" value="DPP6 N-terminal domain-like"/>
    <property type="match status" value="1"/>
</dbReference>
<dbReference type="PROSITE" id="PS00708">
    <property type="entry name" value="PRO_ENDOPEP_SER"/>
    <property type="match status" value="1"/>
</dbReference>
<evidence type="ECO:0000250" key="1"/>
<evidence type="ECO:0000255" key="2"/>
<evidence type="ECO:0000255" key="3">
    <source>
        <dbReference type="PROSITE-ProRule" id="PRU10084"/>
    </source>
</evidence>
<evidence type="ECO:0000256" key="4">
    <source>
        <dbReference type="SAM" id="MobiDB-lite"/>
    </source>
</evidence>
<evidence type="ECO:0000305" key="5"/>
<accession>C1GT79</accession>
<name>DAPB_PARBA</name>
<gene>
    <name type="primary">DAPB</name>
    <name type="ORF">PAAG_01724</name>
</gene>
<proteinExistence type="inferred from homology"/>
<organism>
    <name type="scientific">Paracoccidioides lutzii (strain ATCC MYA-826 / Pb01)</name>
    <name type="common">Paracoccidioides brasiliensis</name>
    <dbReference type="NCBI Taxonomy" id="502779"/>
    <lineage>
        <taxon>Eukaryota</taxon>
        <taxon>Fungi</taxon>
        <taxon>Dikarya</taxon>
        <taxon>Ascomycota</taxon>
        <taxon>Pezizomycotina</taxon>
        <taxon>Eurotiomycetes</taxon>
        <taxon>Eurotiomycetidae</taxon>
        <taxon>Onygenales</taxon>
        <taxon>Ajellomycetaceae</taxon>
        <taxon>Paracoccidioides</taxon>
    </lineage>
</organism>
<sequence>MAAEKGESSDEERKPLTRDSMEYRDSSNSLHYSSSAASLSLAVIDRINGSTHDTGPNEIGRGDRDYSDDGEYDLEEADYIPSGGKPVQKKVKIVLGFLLFLCLSGWSLSFVLFLFGGHESSKTSNVYDDNISDTGSQGNKITLDEVLDGTWSPAFHDISWIPGPNGEDGLLLERGASISNGYLRVEDIVSRKDPKSSKKPIVLMQKAYFNVSGEAVFPSRVWPSPDLKTVLVLSNEEKNWRHSFTGKYWLFDVESQTGQPLDPAAKDQRVQLASWSPRSDAVVFTRDNNMFLRKLSSNEVMKITTNGGVNLFYGVPDWVYEEEVYSGNSVTWWADDGEYIAFLRTNESSVPEYPVQYFVSLPNGEISKPGEESYPETRKIKYPKAGAPNPIVDLQFFDVGKDEVFSVDIKGDFADSNRLITEVVWASNGKVIVRSTNRESDVLHVAVIDVLSRTGKIVRKEDINALDGGWVEPSQTARFIPADPDNGRLNDGYIDTVIYEGRDQLAYYTPVDNPNPIVLTKGHSEVVQAPSGVDLKRGLVYFVVAGNEPWERHIYSVNFDGTSIQPVTNVSESSYYDVSFSNGAGYAFLKYAGPQVPWQKVISTPANEVTFEETIEENNRLSERLRQYTLESKIYQYIDIDGFSLPVLERRPPNFNQTKKYPVLFYLYGGPGSQTVNKKFNVDFQSYVAANLGYIVVTVDGRGTGFIGRKARCVIRGNLGHFESRDQIQAAKIWAAKPYVDESRISIWGWSYGGFMALKTIEQDGGRTFKYGIAVAPVTDWRYYDSIYTERYMHTPQRNPGGYDNAAISNTTALANNIRFLVMHGTADDNVHIQNSLTFIDKLDVNNVHNYDVHFFPDSDHSIYFHNAHKIVYSRLADWLVNAFNGEWLKTYNPAPNDSIFRRAAIWVGLSI</sequence>
<reference key="1">
    <citation type="journal article" date="2011" name="PLoS Genet.">
        <title>Comparative genomic analysis of human fungal pathogens causing paracoccidioidomycosis.</title>
        <authorList>
            <person name="Desjardins C.A."/>
            <person name="Champion M.D."/>
            <person name="Holder J.W."/>
            <person name="Muszewska A."/>
            <person name="Goldberg J."/>
            <person name="Bailao A.M."/>
            <person name="Brigido M.M."/>
            <person name="Ferreira M.E."/>
            <person name="Garcia A.M."/>
            <person name="Grynberg M."/>
            <person name="Gujja S."/>
            <person name="Heiman D.I."/>
            <person name="Henn M.R."/>
            <person name="Kodira C.D."/>
            <person name="Leon-Narvaez H."/>
            <person name="Longo L.V.G."/>
            <person name="Ma L.-J."/>
            <person name="Malavazi I."/>
            <person name="Matsuo A.L."/>
            <person name="Morais F.V."/>
            <person name="Pereira M."/>
            <person name="Rodriguez-Brito S."/>
            <person name="Sakthikumar S."/>
            <person name="Salem-Izacc S.M."/>
            <person name="Sykes S.M."/>
            <person name="Teixeira M.M."/>
            <person name="Vallejo M.C."/>
            <person name="Walter M.E."/>
            <person name="Yandava C."/>
            <person name="Young S."/>
            <person name="Zeng Q."/>
            <person name="Zucker J."/>
            <person name="Felipe M.S."/>
            <person name="Goldman G.H."/>
            <person name="Haas B.J."/>
            <person name="McEwen J.G."/>
            <person name="Nino-Vega G."/>
            <person name="Puccia R."/>
            <person name="San-Blas G."/>
            <person name="Soares C.M."/>
            <person name="Birren B.W."/>
            <person name="Cuomo C.A."/>
        </authorList>
    </citation>
    <scope>NUCLEOTIDE SEQUENCE [LARGE SCALE GENOMIC DNA]</scope>
    <source>
        <strain>ATCC MYA-826 / Pb01</strain>
    </source>
</reference>
<feature type="chain" id="PRO_0000412153" description="Probable dipeptidyl-aminopeptidase B">
    <location>
        <begin position="1"/>
        <end position="912"/>
    </location>
</feature>
<feature type="topological domain" description="Cytoplasmic" evidence="2">
    <location>
        <begin position="1"/>
        <end position="92"/>
    </location>
</feature>
<feature type="transmembrane region" description="Helical; Signal-anchor for type II membrane protein" evidence="2">
    <location>
        <begin position="93"/>
        <end position="113"/>
    </location>
</feature>
<feature type="topological domain" description="Vacuolar" evidence="2">
    <location>
        <begin position="114"/>
        <end position="912"/>
    </location>
</feature>
<feature type="region of interest" description="Disordered" evidence="4">
    <location>
        <begin position="1"/>
        <end position="31"/>
    </location>
</feature>
<feature type="region of interest" description="Disordered" evidence="4">
    <location>
        <begin position="49"/>
        <end position="70"/>
    </location>
</feature>
<feature type="compositionally biased region" description="Basic and acidic residues" evidence="4">
    <location>
        <begin position="1"/>
        <end position="25"/>
    </location>
</feature>
<feature type="active site" description="Charge relay system" evidence="3">
    <location>
        <position position="751"/>
    </location>
</feature>
<feature type="active site" description="Charge relay system" evidence="3">
    <location>
        <position position="828"/>
    </location>
</feature>
<feature type="active site" description="Charge relay system" evidence="3">
    <location>
        <position position="861"/>
    </location>
</feature>
<feature type="glycosylation site" description="N-linked (GlcNAc...) asparagine" evidence="2">
    <location>
        <position position="130"/>
    </location>
</feature>
<feature type="glycosylation site" description="N-linked (GlcNAc...) asparagine" evidence="2">
    <location>
        <position position="210"/>
    </location>
</feature>
<feature type="glycosylation site" description="N-linked (GlcNAc...) asparagine" evidence="2">
    <location>
        <position position="346"/>
    </location>
</feature>
<feature type="glycosylation site" description="N-linked (GlcNAc...) asparagine" evidence="2">
    <location>
        <position position="569"/>
    </location>
</feature>
<feature type="glycosylation site" description="N-linked (GlcNAc...) asparagine" evidence="2">
    <location>
        <position position="656"/>
    </location>
</feature>
<feature type="glycosylation site" description="N-linked (GlcNAc...) asparagine" evidence="2">
    <location>
        <position position="810"/>
    </location>
</feature>
<feature type="glycosylation site" description="N-linked (GlcNAc...) asparagine" evidence="2">
    <location>
        <position position="897"/>
    </location>
</feature>
<protein>
    <recommendedName>
        <fullName>Probable dipeptidyl-aminopeptidase B</fullName>
        <shortName>DPAP B</shortName>
        <ecNumber>3.4.14.5</ecNumber>
    </recommendedName>
</protein>
<comment type="function">
    <text evidence="1">Type IV dipeptidyl-peptidase which removes N-terminal dipeptides sequentially from polypeptides having unsubstituted N-termini provided that the penultimate residue is proline.</text>
</comment>
<comment type="catalytic activity">
    <reaction evidence="3">
        <text>Release of an N-terminal dipeptide, Xaa-Yaa-|-Zaa-, from a polypeptide, preferentially when Yaa is Pro, provided Zaa is neither Pro nor hydroxyproline.</text>
        <dbReference type="EC" id="3.4.14.5"/>
    </reaction>
</comment>
<comment type="subcellular location">
    <subcellularLocation>
        <location evidence="1">Vacuole membrane</location>
        <topology evidence="1">Single-pass type II membrane protein</topology>
    </subcellularLocation>
    <text evidence="1">Lysosome-like vacuoles.</text>
</comment>
<comment type="similarity">
    <text evidence="5">Belongs to the peptidase S9B family.</text>
</comment>